<keyword id="KW-0030">Aminoacyl-tRNA synthetase</keyword>
<keyword id="KW-0067">ATP-binding</keyword>
<keyword id="KW-0963">Cytoplasm</keyword>
<keyword id="KW-0436">Ligase</keyword>
<keyword id="KW-0547">Nucleotide-binding</keyword>
<keyword id="KW-0648">Protein biosynthesis</keyword>
<sequence length="577" mass="63768">MNIQALINDKVSQALEAAGAPAGSPAAVRQSAKPQFGDYQANGVMGVAKQLGTNPREFAQKVLDVLDLDGIASKTEIAGPGFINIFLSEEFLAKQAEAALADPRLGVASEEAQTIVADYSAPNVAKEMHVGHLRSTIIGDAVVRTLEFLGHKVIRANHIGDWGTQFGMLIANLERVQQESGEVSMELADLEGFYRESKKLYDEDEEFAVKARGYVVKLQSGDEFCAEMWKKLVDVTMIQNQRNYDRLNVSLSRDDVMGESMYNDMLPKIVADLKAQGLAVEDDGAQVVFLEEFKNKDGEPMGVIVQKRDGGFLYTTTDIACAKYRYEELGADRVLYFIDSRQHQHLMQAWTIVRKAGYVPESVSLEHHAFGMMLGKDGKPFKTRAGGTVRLADLLDEAEVRAAQLIESKNPELAEDEKKAIANTVAMAAVKYADLSKHRTTDYVFDWDNMLAFEGNTAPYMQYAYTRVASVFAKAGVSMDDLQGEIKITDEKEKALIAKLMQFEEAVQSVAREGQPHIMCSYLFELAGQFSSFYEACPILVAEDEAVKQSRLKLAALTAKTIKQGLSLLGIDTLERM</sequence>
<feature type="chain" id="PRO_0000151634" description="Arginine--tRNA ligase">
    <location>
        <begin position="1"/>
        <end position="577"/>
    </location>
</feature>
<feature type="short sequence motif" description="'HIGH' region">
    <location>
        <begin position="122"/>
        <end position="132"/>
    </location>
</feature>
<organism>
    <name type="scientific">Vibrio vulnificus (strain CMCP6)</name>
    <dbReference type="NCBI Taxonomy" id="216895"/>
    <lineage>
        <taxon>Bacteria</taxon>
        <taxon>Pseudomonadati</taxon>
        <taxon>Pseudomonadota</taxon>
        <taxon>Gammaproteobacteria</taxon>
        <taxon>Vibrionales</taxon>
        <taxon>Vibrionaceae</taxon>
        <taxon>Vibrio</taxon>
    </lineage>
</organism>
<name>SYR_VIBVU</name>
<protein>
    <recommendedName>
        <fullName evidence="1">Arginine--tRNA ligase</fullName>
        <ecNumber evidence="1">6.1.1.19</ecNumber>
    </recommendedName>
    <alternativeName>
        <fullName evidence="1">Arginyl-tRNA synthetase</fullName>
        <shortName evidence="1">ArgRS</shortName>
    </alternativeName>
</protein>
<dbReference type="EC" id="6.1.1.19" evidence="1"/>
<dbReference type="EMBL" id="AE016795">
    <property type="protein sequence ID" value="AAO08683.1"/>
    <property type="molecule type" value="Genomic_DNA"/>
</dbReference>
<dbReference type="RefSeq" id="WP_011078262.1">
    <property type="nucleotide sequence ID" value="NC_004459.3"/>
</dbReference>
<dbReference type="SMR" id="Q8DFR1"/>
<dbReference type="KEGG" id="vvu:VV1_0145"/>
<dbReference type="HOGENOM" id="CLU_006406_5_1_6"/>
<dbReference type="Proteomes" id="UP000002275">
    <property type="component" value="Chromosome 1"/>
</dbReference>
<dbReference type="GO" id="GO:0005737">
    <property type="term" value="C:cytoplasm"/>
    <property type="evidence" value="ECO:0007669"/>
    <property type="project" value="UniProtKB-SubCell"/>
</dbReference>
<dbReference type="GO" id="GO:0004814">
    <property type="term" value="F:arginine-tRNA ligase activity"/>
    <property type="evidence" value="ECO:0007669"/>
    <property type="project" value="UniProtKB-UniRule"/>
</dbReference>
<dbReference type="GO" id="GO:0005524">
    <property type="term" value="F:ATP binding"/>
    <property type="evidence" value="ECO:0007669"/>
    <property type="project" value="UniProtKB-UniRule"/>
</dbReference>
<dbReference type="GO" id="GO:0006420">
    <property type="term" value="P:arginyl-tRNA aminoacylation"/>
    <property type="evidence" value="ECO:0007669"/>
    <property type="project" value="UniProtKB-UniRule"/>
</dbReference>
<dbReference type="CDD" id="cd07956">
    <property type="entry name" value="Anticodon_Ia_Arg"/>
    <property type="match status" value="1"/>
</dbReference>
<dbReference type="CDD" id="cd00671">
    <property type="entry name" value="ArgRS_core"/>
    <property type="match status" value="1"/>
</dbReference>
<dbReference type="FunFam" id="1.10.730.10:FF:000001">
    <property type="entry name" value="Arginine--tRNA ligase"/>
    <property type="match status" value="1"/>
</dbReference>
<dbReference type="FunFam" id="3.40.50.620:FF:000030">
    <property type="entry name" value="Arginine--tRNA ligase"/>
    <property type="match status" value="1"/>
</dbReference>
<dbReference type="Gene3D" id="3.30.1360.70">
    <property type="entry name" value="Arginyl tRNA synthetase N-terminal domain"/>
    <property type="match status" value="1"/>
</dbReference>
<dbReference type="Gene3D" id="3.40.50.620">
    <property type="entry name" value="HUPs"/>
    <property type="match status" value="1"/>
</dbReference>
<dbReference type="Gene3D" id="1.10.730.10">
    <property type="entry name" value="Isoleucyl-tRNA Synthetase, Domain 1"/>
    <property type="match status" value="1"/>
</dbReference>
<dbReference type="HAMAP" id="MF_00123">
    <property type="entry name" value="Arg_tRNA_synth"/>
    <property type="match status" value="1"/>
</dbReference>
<dbReference type="InterPro" id="IPR001412">
    <property type="entry name" value="aa-tRNA-synth_I_CS"/>
</dbReference>
<dbReference type="InterPro" id="IPR001278">
    <property type="entry name" value="Arg-tRNA-ligase"/>
</dbReference>
<dbReference type="InterPro" id="IPR005148">
    <property type="entry name" value="Arg-tRNA-synth_N"/>
</dbReference>
<dbReference type="InterPro" id="IPR036695">
    <property type="entry name" value="Arg-tRNA-synth_N_sf"/>
</dbReference>
<dbReference type="InterPro" id="IPR035684">
    <property type="entry name" value="ArgRS_core"/>
</dbReference>
<dbReference type="InterPro" id="IPR008909">
    <property type="entry name" value="DALR_anticod-bd"/>
</dbReference>
<dbReference type="InterPro" id="IPR014729">
    <property type="entry name" value="Rossmann-like_a/b/a_fold"/>
</dbReference>
<dbReference type="InterPro" id="IPR009080">
    <property type="entry name" value="tRNAsynth_Ia_anticodon-bd"/>
</dbReference>
<dbReference type="NCBIfam" id="TIGR00456">
    <property type="entry name" value="argS"/>
    <property type="match status" value="1"/>
</dbReference>
<dbReference type="PANTHER" id="PTHR11956:SF5">
    <property type="entry name" value="ARGININE--TRNA LIGASE, CYTOPLASMIC"/>
    <property type="match status" value="1"/>
</dbReference>
<dbReference type="PANTHER" id="PTHR11956">
    <property type="entry name" value="ARGINYL-TRNA SYNTHETASE"/>
    <property type="match status" value="1"/>
</dbReference>
<dbReference type="Pfam" id="PF03485">
    <property type="entry name" value="Arg_tRNA_synt_N"/>
    <property type="match status" value="1"/>
</dbReference>
<dbReference type="Pfam" id="PF05746">
    <property type="entry name" value="DALR_1"/>
    <property type="match status" value="1"/>
</dbReference>
<dbReference type="Pfam" id="PF00750">
    <property type="entry name" value="tRNA-synt_1d"/>
    <property type="match status" value="1"/>
</dbReference>
<dbReference type="PRINTS" id="PR01038">
    <property type="entry name" value="TRNASYNTHARG"/>
</dbReference>
<dbReference type="SMART" id="SM01016">
    <property type="entry name" value="Arg_tRNA_synt_N"/>
    <property type="match status" value="1"/>
</dbReference>
<dbReference type="SMART" id="SM00836">
    <property type="entry name" value="DALR_1"/>
    <property type="match status" value="1"/>
</dbReference>
<dbReference type="SUPFAM" id="SSF47323">
    <property type="entry name" value="Anticodon-binding domain of a subclass of class I aminoacyl-tRNA synthetases"/>
    <property type="match status" value="1"/>
</dbReference>
<dbReference type="SUPFAM" id="SSF55190">
    <property type="entry name" value="Arginyl-tRNA synthetase (ArgRS), N-terminal 'additional' domain"/>
    <property type="match status" value="1"/>
</dbReference>
<dbReference type="SUPFAM" id="SSF52374">
    <property type="entry name" value="Nucleotidylyl transferase"/>
    <property type="match status" value="1"/>
</dbReference>
<dbReference type="PROSITE" id="PS00178">
    <property type="entry name" value="AA_TRNA_LIGASE_I"/>
    <property type="match status" value="1"/>
</dbReference>
<comment type="catalytic activity">
    <reaction evidence="1">
        <text>tRNA(Arg) + L-arginine + ATP = L-arginyl-tRNA(Arg) + AMP + diphosphate</text>
        <dbReference type="Rhea" id="RHEA:20301"/>
        <dbReference type="Rhea" id="RHEA-COMP:9658"/>
        <dbReference type="Rhea" id="RHEA-COMP:9673"/>
        <dbReference type="ChEBI" id="CHEBI:30616"/>
        <dbReference type="ChEBI" id="CHEBI:32682"/>
        <dbReference type="ChEBI" id="CHEBI:33019"/>
        <dbReference type="ChEBI" id="CHEBI:78442"/>
        <dbReference type="ChEBI" id="CHEBI:78513"/>
        <dbReference type="ChEBI" id="CHEBI:456215"/>
        <dbReference type="EC" id="6.1.1.19"/>
    </reaction>
</comment>
<comment type="subunit">
    <text evidence="1">Monomer.</text>
</comment>
<comment type="subcellular location">
    <subcellularLocation>
        <location evidence="1">Cytoplasm</location>
    </subcellularLocation>
</comment>
<comment type="similarity">
    <text evidence="1">Belongs to the class-I aminoacyl-tRNA synthetase family.</text>
</comment>
<reference key="1">
    <citation type="submission" date="2002-12" db="EMBL/GenBank/DDBJ databases">
        <title>Complete genome sequence of Vibrio vulnificus CMCP6.</title>
        <authorList>
            <person name="Rhee J.H."/>
            <person name="Kim S.Y."/>
            <person name="Chung S.S."/>
            <person name="Kim J.J."/>
            <person name="Moon Y.H."/>
            <person name="Jeong H."/>
            <person name="Choy H.E."/>
        </authorList>
    </citation>
    <scope>NUCLEOTIDE SEQUENCE [LARGE SCALE GENOMIC DNA]</scope>
    <source>
        <strain>CMCP6</strain>
    </source>
</reference>
<evidence type="ECO:0000255" key="1">
    <source>
        <dbReference type="HAMAP-Rule" id="MF_00123"/>
    </source>
</evidence>
<gene>
    <name evidence="1" type="primary">argS</name>
    <name type="ordered locus">VV1_0145</name>
</gene>
<proteinExistence type="inferred from homology"/>
<accession>Q8DFR1</accession>